<sequence length="317" mass="35226">MEITFLGTSSGVPTRARNVSGVALRLPQRAEAWLFDCGEGTQHQLLRSDLRSSQISRIFITHMHGDHIFGLMGLIASMGLAGTGHPLEIYGPPGLEEYLRACEKYSYMRIGDRLRVHLVKPGLVFEDKEFQVTCLPLKHRVTAFGYRVTEKDRPGRFNLAKAQKLGIPPGPIYGDLKKGKVVTLDDGRKINGSDLCGQPEIGRKMVYCTDTVFCETAVELAQDADVLIHEATFAHKDAEMAFDRLHSTSTMAAQVALLAQVKQLIMTHFSPRYMPGNELTLDDLLAEAQAIFPKTIMAKDFLSYAIPRRKALAKSLH</sequence>
<proteinExistence type="inferred from homology"/>
<name>RNZ_PICP2</name>
<dbReference type="EC" id="3.1.26.11" evidence="1"/>
<dbReference type="EMBL" id="CP000951">
    <property type="protein sequence ID" value="ACB00776.1"/>
    <property type="molecule type" value="Genomic_DNA"/>
</dbReference>
<dbReference type="RefSeq" id="WP_012308394.1">
    <property type="nucleotide sequence ID" value="NZ_JAHHPU010000014.1"/>
</dbReference>
<dbReference type="SMR" id="B1XN66"/>
<dbReference type="STRING" id="32049.SYNPCC7002_A2807"/>
<dbReference type="KEGG" id="syp:SYNPCC7002_A2807"/>
<dbReference type="eggNOG" id="COG1234">
    <property type="taxonomic scope" value="Bacteria"/>
</dbReference>
<dbReference type="HOGENOM" id="CLU_031317_2_0_3"/>
<dbReference type="Proteomes" id="UP000001688">
    <property type="component" value="Chromosome"/>
</dbReference>
<dbReference type="GO" id="GO:0042781">
    <property type="term" value="F:3'-tRNA processing endoribonuclease activity"/>
    <property type="evidence" value="ECO:0007669"/>
    <property type="project" value="UniProtKB-UniRule"/>
</dbReference>
<dbReference type="GO" id="GO:0008270">
    <property type="term" value="F:zinc ion binding"/>
    <property type="evidence" value="ECO:0007669"/>
    <property type="project" value="UniProtKB-UniRule"/>
</dbReference>
<dbReference type="CDD" id="cd07717">
    <property type="entry name" value="RNaseZ_ZiPD-like_MBL-fold"/>
    <property type="match status" value="1"/>
</dbReference>
<dbReference type="FunFam" id="3.60.15.10:FF:000002">
    <property type="entry name" value="Ribonuclease Z"/>
    <property type="match status" value="1"/>
</dbReference>
<dbReference type="Gene3D" id="3.60.15.10">
    <property type="entry name" value="Ribonuclease Z/Hydroxyacylglutathione hydrolase-like"/>
    <property type="match status" value="1"/>
</dbReference>
<dbReference type="HAMAP" id="MF_01818">
    <property type="entry name" value="RNase_Z_BN"/>
    <property type="match status" value="1"/>
</dbReference>
<dbReference type="InterPro" id="IPR001279">
    <property type="entry name" value="Metallo-B-lactamas"/>
</dbReference>
<dbReference type="InterPro" id="IPR036866">
    <property type="entry name" value="RibonucZ/Hydroxyglut_hydro"/>
</dbReference>
<dbReference type="InterPro" id="IPR013471">
    <property type="entry name" value="RNase_Z/BN"/>
</dbReference>
<dbReference type="NCBIfam" id="NF000801">
    <property type="entry name" value="PRK00055.1-3"/>
    <property type="match status" value="1"/>
</dbReference>
<dbReference type="NCBIfam" id="TIGR02651">
    <property type="entry name" value="RNase_Z"/>
    <property type="match status" value="1"/>
</dbReference>
<dbReference type="PANTHER" id="PTHR46018">
    <property type="entry name" value="ZINC PHOSPHODIESTERASE ELAC PROTEIN 1"/>
    <property type="match status" value="1"/>
</dbReference>
<dbReference type="PANTHER" id="PTHR46018:SF2">
    <property type="entry name" value="ZINC PHOSPHODIESTERASE ELAC PROTEIN 1"/>
    <property type="match status" value="1"/>
</dbReference>
<dbReference type="Pfam" id="PF12706">
    <property type="entry name" value="Lactamase_B_2"/>
    <property type="match status" value="2"/>
</dbReference>
<dbReference type="SUPFAM" id="SSF56281">
    <property type="entry name" value="Metallo-hydrolase/oxidoreductase"/>
    <property type="match status" value="1"/>
</dbReference>
<reference key="1">
    <citation type="submission" date="2008-02" db="EMBL/GenBank/DDBJ databases">
        <title>Complete sequence of Synechococcus sp. PCC 7002.</title>
        <authorList>
            <person name="Li T."/>
            <person name="Zhao J."/>
            <person name="Zhao C."/>
            <person name="Liu Z."/>
            <person name="Zhao F."/>
            <person name="Marquardt J."/>
            <person name="Nomura C.T."/>
            <person name="Persson S."/>
            <person name="Detter J.C."/>
            <person name="Richardson P.M."/>
            <person name="Lanz C."/>
            <person name="Schuster S.C."/>
            <person name="Wang J."/>
            <person name="Li S."/>
            <person name="Huang X."/>
            <person name="Cai T."/>
            <person name="Yu Z."/>
            <person name="Luo J."/>
            <person name="Zhao J."/>
            <person name="Bryant D.A."/>
        </authorList>
    </citation>
    <scope>NUCLEOTIDE SEQUENCE [LARGE SCALE GENOMIC DNA]</scope>
    <source>
        <strain>ATCC 27264 / PCC 7002 / PR-6</strain>
    </source>
</reference>
<keyword id="KW-0255">Endonuclease</keyword>
<keyword id="KW-0378">Hydrolase</keyword>
<keyword id="KW-0479">Metal-binding</keyword>
<keyword id="KW-0540">Nuclease</keyword>
<keyword id="KW-1185">Reference proteome</keyword>
<keyword id="KW-0819">tRNA processing</keyword>
<keyword id="KW-0862">Zinc</keyword>
<accession>B1XN66</accession>
<gene>
    <name evidence="1" type="primary">rnz</name>
    <name type="ordered locus">SYNPCC7002_A2807</name>
</gene>
<protein>
    <recommendedName>
        <fullName evidence="1">Ribonuclease Z</fullName>
        <shortName evidence="1">RNase Z</shortName>
        <ecNumber evidence="1">3.1.26.11</ecNumber>
    </recommendedName>
    <alternativeName>
        <fullName evidence="1">tRNA 3 endonuclease</fullName>
    </alternativeName>
    <alternativeName>
        <fullName evidence="1">tRNase Z</fullName>
    </alternativeName>
</protein>
<comment type="function">
    <text evidence="1">Zinc phosphodiesterase, which displays some tRNA 3'-processing endonuclease activity. Probably involved in tRNA maturation, by removing a 3'-trailer from precursor tRNA.</text>
</comment>
<comment type="catalytic activity">
    <reaction evidence="1">
        <text>Endonucleolytic cleavage of RNA, removing extra 3' nucleotides from tRNA precursor, generating 3' termini of tRNAs. A 3'-hydroxy group is left at the tRNA terminus and a 5'-phosphoryl group is left at the trailer molecule.</text>
        <dbReference type="EC" id="3.1.26.11"/>
    </reaction>
</comment>
<comment type="cofactor">
    <cofactor evidence="1">
        <name>Zn(2+)</name>
        <dbReference type="ChEBI" id="CHEBI:29105"/>
    </cofactor>
    <text evidence="1">Binds 2 Zn(2+) ions.</text>
</comment>
<comment type="subunit">
    <text evidence="1">Homodimer.</text>
</comment>
<comment type="similarity">
    <text evidence="1">Belongs to the RNase Z family.</text>
</comment>
<evidence type="ECO:0000255" key="1">
    <source>
        <dbReference type="HAMAP-Rule" id="MF_01818"/>
    </source>
</evidence>
<organism>
    <name type="scientific">Picosynechococcus sp. (strain ATCC 27264 / PCC 7002 / PR-6)</name>
    <name type="common">Agmenellum quadruplicatum</name>
    <dbReference type="NCBI Taxonomy" id="32049"/>
    <lineage>
        <taxon>Bacteria</taxon>
        <taxon>Bacillati</taxon>
        <taxon>Cyanobacteriota</taxon>
        <taxon>Cyanophyceae</taxon>
        <taxon>Oscillatoriophycideae</taxon>
        <taxon>Chroococcales</taxon>
        <taxon>Geminocystaceae</taxon>
        <taxon>Picosynechococcus</taxon>
    </lineage>
</organism>
<feature type="chain" id="PRO_1000188001" description="Ribonuclease Z">
    <location>
        <begin position="1"/>
        <end position="317"/>
    </location>
</feature>
<feature type="active site" description="Proton acceptor" evidence="1">
    <location>
        <position position="66"/>
    </location>
</feature>
<feature type="binding site" evidence="1">
    <location>
        <position position="62"/>
    </location>
    <ligand>
        <name>Zn(2+)</name>
        <dbReference type="ChEBI" id="CHEBI:29105"/>
        <label>1</label>
        <note>catalytic</note>
    </ligand>
</feature>
<feature type="binding site" evidence="1">
    <location>
        <position position="64"/>
    </location>
    <ligand>
        <name>Zn(2+)</name>
        <dbReference type="ChEBI" id="CHEBI:29105"/>
        <label>1</label>
        <note>catalytic</note>
    </ligand>
</feature>
<feature type="binding site" evidence="1">
    <location>
        <position position="66"/>
    </location>
    <ligand>
        <name>Zn(2+)</name>
        <dbReference type="ChEBI" id="CHEBI:29105"/>
        <label>2</label>
        <note>catalytic</note>
    </ligand>
</feature>
<feature type="binding site" evidence="1">
    <location>
        <position position="67"/>
    </location>
    <ligand>
        <name>Zn(2+)</name>
        <dbReference type="ChEBI" id="CHEBI:29105"/>
        <label>2</label>
        <note>catalytic</note>
    </ligand>
</feature>
<feature type="binding site" evidence="1">
    <location>
        <position position="139"/>
    </location>
    <ligand>
        <name>Zn(2+)</name>
        <dbReference type="ChEBI" id="CHEBI:29105"/>
        <label>1</label>
        <note>catalytic</note>
    </ligand>
</feature>
<feature type="binding site" evidence="1">
    <location>
        <position position="210"/>
    </location>
    <ligand>
        <name>Zn(2+)</name>
        <dbReference type="ChEBI" id="CHEBI:29105"/>
        <label>1</label>
        <note>catalytic</note>
    </ligand>
</feature>
<feature type="binding site" evidence="1">
    <location>
        <position position="210"/>
    </location>
    <ligand>
        <name>Zn(2+)</name>
        <dbReference type="ChEBI" id="CHEBI:29105"/>
        <label>2</label>
        <note>catalytic</note>
    </ligand>
</feature>
<feature type="binding site" evidence="1">
    <location>
        <position position="268"/>
    </location>
    <ligand>
        <name>Zn(2+)</name>
        <dbReference type="ChEBI" id="CHEBI:29105"/>
        <label>2</label>
        <note>catalytic</note>
    </ligand>
</feature>